<reference key="1">
    <citation type="journal article" date="2005" name="J. Biochem.">
        <title>Expression and molecular characterization of spherical particles derived from the genome of the hyperthermophilic euryarchaeote Pyrococcus furiosus.</title>
        <authorList>
            <person name="Namba K."/>
            <person name="Hagiwara K."/>
            <person name="Tanaka H."/>
            <person name="Nakaishi Y."/>
            <person name="Chong K.T."/>
            <person name="Yamashita E."/>
            <person name="Armah G.E."/>
            <person name="Ono Y."/>
            <person name="Ishino Y."/>
            <person name="Omura T."/>
            <person name="Tsukihara T."/>
            <person name="Nakagawa A."/>
        </authorList>
    </citation>
    <scope>NUCLEOTIDE SEQUENCE [GENOMIC DNA]</scope>
    <scope>PROTEIN SEQUENCE OF 1-9; 53-84; 92-132; 160-169 AND 171-216</scope>
    <scope>SEQUENCE REVISION TO 91</scope>
    <scope>SUBCELLULAR LOCATION</scope>
    <source>
        <strain>ATCC 43587 / DSM 3638 / JCM 8422 / Vc1</strain>
    </source>
</reference>
<reference key="2">
    <citation type="journal article" date="1999" name="Genetics">
        <title>Divergence of the hyperthermophilic archaea Pyrococcus furiosus and P. horikoshii inferred from complete genomic sequences.</title>
        <authorList>
            <person name="Maeder D.L."/>
            <person name="Weiss R.B."/>
            <person name="Dunn D.M."/>
            <person name="Cherry J.L."/>
            <person name="Gonzalez J.M."/>
            <person name="DiRuggiero J."/>
            <person name="Robb F.T."/>
        </authorList>
    </citation>
    <scope>NUCLEOTIDE SEQUENCE [LARGE SCALE GENOMIC DNA]</scope>
    <source>
        <strain>ATCC 43587 / DSM 3638 / JCM 8422 / Vc1</strain>
    </source>
</reference>
<reference key="3">
    <citation type="journal article" date="2021" name="Nat. Commun.">
        <title>Large-scale computational discovery and analysis of virus-derived microbial nanocompartments.</title>
        <authorList>
            <person name="Andreas M.P."/>
            <person name="Giessen T.W."/>
        </authorList>
    </citation>
    <scope>CLASSIFICATION</scope>
</reference>
<reference evidence="11" key="4">
    <citation type="journal article" date="2007" name="J. Mol. Biol.">
        <title>The crystal structure of a virus-like particle from the hyperthermophilic archaeon Pyrococcus furiosus provides insight into the evolution of viruses.</title>
        <authorList>
            <person name="Akita F."/>
            <person name="Chong K.T."/>
            <person name="Tanaka H."/>
            <person name="Yamashita E."/>
            <person name="Miyazaki N."/>
            <person name="Nakaishi Y."/>
            <person name="Suzuki M."/>
            <person name="Namba K."/>
            <person name="Ono Y."/>
            <person name="Tsukihara T."/>
            <person name="Nakagawa A."/>
        </authorList>
    </citation>
    <scope>X-RAY CRYSTALLOGRAPHY (3.60 ANGSTROMS)</scope>
    <scope>FUNCTION</scope>
    <scope>SUBUNIT</scope>
    <scope>SUBCELLULAR LOCATION</scope>
    <scope>DOMAIN</scope>
    <source>
        <strain>ATCC 43587 / DSM 3638 / JCM 8422 / Vc1</strain>
    </source>
</reference>
<reference evidence="12" key="5">
    <citation type="journal article" date="2019" name="Biochem. J.">
        <title>Conservation of the structural and functional architecture of encapsulated ferritins in bacteria and archaea.</title>
        <authorList>
            <person name="He D."/>
            <person name="Piergentili C."/>
            <person name="Ross J."/>
            <person name="Tarrant E."/>
            <person name="Tuck L.R."/>
            <person name="Mackay C.L."/>
            <person name="McIver Z."/>
            <person name="Waldron K.J."/>
            <person name="Clarke D.J."/>
            <person name="Marles-Wright J."/>
        </authorList>
    </citation>
    <scope>X-RAY CRYSTALLOGRAPHY (2.03 ANGSTROMS) OF 2-98 IN COMPLEX WITH IRON</scope>
    <scope>FUNCTION</scope>
    <scope>CATALYTIC ACTIVITY</scope>
    <scope>SUBUNIT</scope>
    <source>
        <strain>COM1</strain>
    </source>
</reference>
<keyword id="KW-0002">3D-structure</keyword>
<keyword id="KW-0903">Direct protein sequencing</keyword>
<keyword id="KW-1284">Encapsulin nanocompartment</keyword>
<keyword id="KW-0406">Ion transport</keyword>
<keyword id="KW-0408">Iron</keyword>
<keyword id="KW-0409">Iron storage</keyword>
<keyword id="KW-0410">Iron transport</keyword>
<keyword id="KW-0479">Metal-binding</keyword>
<keyword id="KW-0560">Oxidoreductase</keyword>
<keyword id="KW-1185">Reference proteome</keyword>
<keyword id="KW-0813">Transport</keyword>
<feature type="chain" id="PRO_0000455319" description="Ferritin-like-encapsulin shell fusion protein">
    <location>
        <begin position="1"/>
        <end position="345"/>
    </location>
</feature>
<feature type="region of interest" description="Ferritin-like domain" evidence="8">
    <location>
        <begin position="1"/>
        <end position="109"/>
    </location>
</feature>
<feature type="region of interest" description="Encapsulin domain" evidence="8">
    <location>
        <begin position="110"/>
        <end position="345"/>
    </location>
</feature>
<feature type="binding site" evidence="9">
    <location>
        <position position="31"/>
    </location>
    <ligand>
        <name>Fe cation</name>
        <dbReference type="ChEBI" id="CHEBI:24875"/>
        <label>1</label>
    </ligand>
</feature>
<feature type="binding site" evidence="9">
    <location>
        <position position="31"/>
    </location>
    <ligand>
        <name>Fe cation</name>
        <dbReference type="ChEBI" id="CHEBI:24875"/>
        <label>2</label>
    </ligand>
</feature>
<feature type="binding site" evidence="9">
    <location>
        <position position="61"/>
    </location>
    <ligand>
        <name>Fe cation</name>
        <dbReference type="ChEBI" id="CHEBI:24875"/>
        <label>1</label>
    </ligand>
</feature>
<feature type="binding site" evidence="9">
    <location>
        <position position="61"/>
    </location>
    <ligand>
        <name>Fe cation</name>
        <dbReference type="ChEBI" id="CHEBI:24875"/>
        <label>2</label>
    </ligand>
</feature>
<feature type="binding site" evidence="9">
    <location>
        <position position="64"/>
    </location>
    <ligand>
        <name>Fe cation</name>
        <dbReference type="ChEBI" id="CHEBI:24875"/>
        <label>1</label>
    </ligand>
</feature>
<feature type="binding site" evidence="9">
    <location>
        <position position="64"/>
    </location>
    <ligand>
        <name>Fe cation</name>
        <dbReference type="ChEBI" id="CHEBI:24875"/>
        <label>2</label>
    </ligand>
</feature>
<feature type="helix" evidence="12">
    <location>
        <begin position="6"/>
        <end position="8"/>
    </location>
</feature>
<feature type="helix" evidence="12">
    <location>
        <begin position="17"/>
        <end position="44"/>
    </location>
</feature>
<feature type="helix" evidence="12">
    <location>
        <begin position="48"/>
        <end position="75"/>
    </location>
</feature>
<feature type="helix" evidence="12">
    <location>
        <begin position="77"/>
        <end position="94"/>
    </location>
</feature>
<proteinExistence type="evidence at protein level"/>
<dbReference type="EC" id="1.16.3.1" evidence="3"/>
<dbReference type="EMBL" id="AB214633">
    <property type="protein sequence ID" value="BAE19947.1"/>
    <property type="molecule type" value="Genomic_DNA"/>
</dbReference>
<dbReference type="EMBL" id="AE009950">
    <property type="protein sequence ID" value="AAL81316.1"/>
    <property type="status" value="ALT_FRAME"/>
    <property type="molecule type" value="Genomic_DNA"/>
</dbReference>
<dbReference type="EMBL" id="AE009950">
    <property type="protein sequence ID" value="AAL81315.1"/>
    <property type="status" value="ALT_FRAME"/>
    <property type="molecule type" value="Genomic_DNA"/>
</dbReference>
<dbReference type="PDB" id="2E0Z">
    <property type="method" value="X-ray"/>
    <property type="resolution" value="3.60 A"/>
    <property type="chains" value="A/B/C=1-345"/>
</dbReference>
<dbReference type="PDB" id="5N5E">
    <property type="method" value="X-ray"/>
    <property type="resolution" value="2.03 A"/>
    <property type="chains" value="A/B/C/D/E/F/G/H/I/J/K/L/M/N/O/P/Q/R/T/U/V/W/X/Y/Z/a/b/c/d/e=2-98"/>
</dbReference>
<dbReference type="PDBsum" id="2E0Z"/>
<dbReference type="PDBsum" id="5N5E"/>
<dbReference type="SMR" id="Q8U1L4"/>
<dbReference type="STRING" id="186497.PF1191"/>
<dbReference type="TCDB" id="1.S.7.1.3">
    <property type="family name" value="the bacterial/archaeal nanocompartment encapsulin shell protein2 (banc-sp2) family"/>
</dbReference>
<dbReference type="PaxDb" id="186497-PF1191"/>
<dbReference type="DNASU" id="1469062"/>
<dbReference type="KEGG" id="pfu:PF1191"/>
<dbReference type="KEGG" id="pfu:PF1192"/>
<dbReference type="PATRIC" id="fig|186497.12.peg.1253"/>
<dbReference type="eggNOG" id="arCOG03349">
    <property type="taxonomic scope" value="Archaea"/>
</dbReference>
<dbReference type="eggNOG" id="arCOG05909">
    <property type="taxonomic scope" value="Archaea"/>
</dbReference>
<dbReference type="HOGENOM" id="CLU_141525_1_0_2"/>
<dbReference type="PhylomeDB" id="Q8U1L4"/>
<dbReference type="EvolutionaryTrace" id="Q8U1L4"/>
<dbReference type="Proteomes" id="UP000001013">
    <property type="component" value="Chromosome"/>
</dbReference>
<dbReference type="GO" id="GO:0140737">
    <property type="term" value="C:encapsulin nanocompartment"/>
    <property type="evidence" value="ECO:0007669"/>
    <property type="project" value="UniProtKB-SubCell"/>
</dbReference>
<dbReference type="GO" id="GO:0046872">
    <property type="term" value="F:metal ion binding"/>
    <property type="evidence" value="ECO:0007669"/>
    <property type="project" value="UniProtKB-KW"/>
</dbReference>
<dbReference type="GO" id="GO:0016491">
    <property type="term" value="F:oxidoreductase activity"/>
    <property type="evidence" value="ECO:0007669"/>
    <property type="project" value="UniProtKB-KW"/>
</dbReference>
<dbReference type="GO" id="GO:0006879">
    <property type="term" value="P:intracellular iron ion homeostasis"/>
    <property type="evidence" value="ECO:0007669"/>
    <property type="project" value="UniProtKB-KW"/>
</dbReference>
<dbReference type="GO" id="GO:0006826">
    <property type="term" value="P:iron ion transport"/>
    <property type="evidence" value="ECO:0007669"/>
    <property type="project" value="UniProtKB-KW"/>
</dbReference>
<dbReference type="Gene3D" id="6.10.140.1960">
    <property type="match status" value="1"/>
</dbReference>
<dbReference type="Gene3D" id="6.20.370.90">
    <property type="match status" value="1"/>
</dbReference>
<dbReference type="Gene3D" id="3.30.2320.10">
    <property type="entry name" value="hypothetical protein PF0899 domain"/>
    <property type="match status" value="1"/>
</dbReference>
<dbReference type="InterPro" id="IPR007544">
    <property type="entry name" value="ENCAP"/>
</dbReference>
<dbReference type="InterPro" id="IPR051429">
    <property type="entry name" value="Encapsulin_nc"/>
</dbReference>
<dbReference type="InterPro" id="IPR009078">
    <property type="entry name" value="Ferritin-like_SF"/>
</dbReference>
<dbReference type="InterPro" id="IPR003251">
    <property type="entry name" value="Rr_diiron-bd_dom"/>
</dbReference>
<dbReference type="PANTHER" id="PTHR37165">
    <property type="entry name" value="PEPTIDASE U56 FAMILY"/>
    <property type="match status" value="1"/>
</dbReference>
<dbReference type="PANTHER" id="PTHR37165:SF1">
    <property type="entry name" value="TYPE 1 ENCAPSULIN SHELL PROTEIN"/>
    <property type="match status" value="1"/>
</dbReference>
<dbReference type="Pfam" id="PF04454">
    <property type="entry name" value="Linocin_M18"/>
    <property type="match status" value="1"/>
</dbReference>
<dbReference type="Pfam" id="PF02915">
    <property type="entry name" value="Rubrerythrin"/>
    <property type="match status" value="1"/>
</dbReference>
<dbReference type="SUPFAM" id="SSF47240">
    <property type="entry name" value="Ferritin-like"/>
    <property type="match status" value="1"/>
</dbReference>
<dbReference type="SUPFAM" id="SSF56563">
    <property type="entry name" value="Major capsid protein gp5"/>
    <property type="match status" value="1"/>
</dbReference>
<accession>Q8U1L4</accession>
<accession>Q401P1</accession>
<accession>Q8U1L5</accession>
<gene>
    <name evidence="6" type="primary">enc</name>
    <name evidence="7" type="ordered locus">PF1192/PF1191</name>
</gene>
<comment type="function">
    <text evidence="1 2 3 6">Fusion of the shell and cargo protein of a type 1 encapsulin nanocompartment (PubMed:17397865). The nanocompartment is probably involved in iron storage (Probable). Expression in E.coli generates spherical particles (PfSPs) about 30 nm in diameter (PubMed:16091594). The purified N-terminus has ferroxidase activity (PubMed:30837306).</text>
</comment>
<comment type="catalytic activity">
    <reaction evidence="3">
        <text>4 Fe(2+) + O2 + 4 H(+) = 4 Fe(3+) + 2 H2O</text>
        <dbReference type="Rhea" id="RHEA:11148"/>
        <dbReference type="ChEBI" id="CHEBI:15377"/>
        <dbReference type="ChEBI" id="CHEBI:15378"/>
        <dbReference type="ChEBI" id="CHEBI:15379"/>
        <dbReference type="ChEBI" id="CHEBI:29033"/>
        <dbReference type="ChEBI" id="CHEBI:29034"/>
        <dbReference type="EC" id="1.16.3.1"/>
    </reaction>
    <physiologicalReaction direction="left-to-right" evidence="3">
        <dbReference type="Rhea" id="RHEA:11149"/>
    </physiologicalReaction>
</comment>
<comment type="activity regulation">
    <text evidence="3">The ferroxidase activity is inhibited by zinc.</text>
</comment>
<comment type="subunit">
    <text evidence="2 3">180 monomers assemble into 12 pentamers and 20 hexamers which further assemble into an icosahedral particle about 36.6 nm in diameter. The N-terminal domain (residues 1-99) crystallizes as 3 decamers (PubMed:30837306).</text>
</comment>
<comment type="subcellular location">
    <subcellularLocation>
        <location evidence="1 2">Encapsulin nanocompartment</location>
    </subcellularLocation>
</comment>
<comment type="domain">
    <text evidence="2 3">The ferritin-like domain N-terminal 109 disordered residues are located inside the organelle in the crystal. The rest of the protein has 3 structural domains; a discontinuous peripheral domain (P, 110-138, 167-210, 304-334), an elongated loop (E, 139-166) and the discontinuous axial domain (A, 211-303 and 335-345). The E loop is highly flexible and allows formation of the pentamers and hexamers from the same protein (PubMed:17397865). The N-terminal domain decamer has negatively charged patches on its exterior, and a negatively charged tunnel at the center, the charges are probably metal-binding sites (PubMed:30837306).</text>
</comment>
<comment type="miscellaneous">
    <text evidence="8">Shows substantial structural similarity to gp5 of the HK97 viral capsid, and while the sequence homology is weak, it suggests this protein may have evolved from a viral capsid protein.</text>
</comment>
<comment type="similarity">
    <text evidence="6">In the N-terminal section; belongs to the ferritin-like superfamily.</text>
</comment>
<comment type="similarity">
    <text evidence="10">In the C-terminal section; belongs to the encapsulin family. Family 1 subfamily.</text>
</comment>
<comment type="sequence caution" evidence="6">
    <conflict type="frameshift">
        <sequence resource="EMBL-CDS" id="AAL81315"/>
    </conflict>
</comment>
<comment type="sequence caution" evidence="6">
    <conflict type="frameshift">
        <sequence resource="EMBL-CDS" id="AAL81316"/>
    </conflict>
</comment>
<name>ENCP1_PYRFU</name>
<organism>
    <name type="scientific">Pyrococcus furiosus (strain ATCC 43587 / DSM 3638 / JCM 8422 / Vc1)</name>
    <dbReference type="NCBI Taxonomy" id="186497"/>
    <lineage>
        <taxon>Archaea</taxon>
        <taxon>Methanobacteriati</taxon>
        <taxon>Methanobacteriota</taxon>
        <taxon>Thermococci</taxon>
        <taxon>Thermococcales</taxon>
        <taxon>Thermococcaceae</taxon>
        <taxon>Pyrococcus</taxon>
    </lineage>
</organism>
<protein>
    <recommendedName>
        <fullName evidence="6">Ferritin-like-encapsulin shell fusion protein</fullName>
        <shortName evidence="5">EncFtn</shortName>
        <ecNumber evidence="3">1.16.3.1</ecNumber>
    </recommendedName>
    <alternativeName>
        <fullName>Type 1 encapsulin shell protein</fullName>
    </alternativeName>
    <alternativeName>
        <fullName evidence="4">Virus-like particle</fullName>
    </alternativeName>
</protein>
<sequence>MLSINPTLINRDKPYTKEELMEILRLAIIAELDAINLYEQMARYSEDENVRKILLDVAREEKAHVGEFMALLLNLDPEQVTELKGGFEEVKELTGIEAHINDNKKEESNVEYFEKLRSALLDGVNKGRSLLKHLPVTRIEGQSFRVDIIKFEDGVRVVKQEYKPIPLLKKKFYVGIRELNDGTYDVSIATKAGELLVKDEESLVIREILSTEGIKKMKLSSWDNPEEALNDLMNALQEASNASAGPFGLIINPKRYAKLLKIYEKSGKMLVEVLKEIFRGGIIVTLNIDENKVIIFANTPAVLDVVVGQDVTLQELGPEGDDVAFLVSEAIGIRIKNPEAIVVLE</sequence>
<evidence type="ECO:0000269" key="1">
    <source>
    </source>
</evidence>
<evidence type="ECO:0000269" key="2">
    <source>
    </source>
</evidence>
<evidence type="ECO:0000269" key="3">
    <source>
    </source>
</evidence>
<evidence type="ECO:0000303" key="4">
    <source>
    </source>
</evidence>
<evidence type="ECO:0000303" key="5">
    <source>
    </source>
</evidence>
<evidence type="ECO:0000305" key="6"/>
<evidence type="ECO:0000305" key="7">
    <source>
    </source>
</evidence>
<evidence type="ECO:0000305" key="8">
    <source>
    </source>
</evidence>
<evidence type="ECO:0000305" key="9">
    <source>
    </source>
</evidence>
<evidence type="ECO:0000305" key="10">
    <source>
    </source>
</evidence>
<evidence type="ECO:0007744" key="11">
    <source>
        <dbReference type="PDB" id="2E0Z"/>
    </source>
</evidence>
<evidence type="ECO:0007829" key="12">
    <source>
        <dbReference type="PDB" id="5N5E"/>
    </source>
</evidence>